<reference key="1">
    <citation type="journal article" date="2008" name="BMC Microbiol.">
        <title>Complete genome sequence of Treponema pallidum ssp. pallidum strain SS14 determined with oligonucleotide arrays.</title>
        <authorList>
            <person name="Matejkova P."/>
            <person name="Strouhal M."/>
            <person name="Smajs D."/>
            <person name="Norris S.J."/>
            <person name="Palzkill T."/>
            <person name="Petrosino J.F."/>
            <person name="Sodergren E."/>
            <person name="Norton J.E."/>
            <person name="Singh J."/>
            <person name="Richmond T.A."/>
            <person name="Molla M.N."/>
            <person name="Albert T.J."/>
            <person name="Weinstock G.M."/>
        </authorList>
    </citation>
    <scope>NUCLEOTIDE SEQUENCE [LARGE SCALE GENOMIC DNA]</scope>
    <source>
        <strain>SS14</strain>
    </source>
</reference>
<organism>
    <name type="scientific">Treponema pallidum subsp. pallidum (strain SS14)</name>
    <dbReference type="NCBI Taxonomy" id="455434"/>
    <lineage>
        <taxon>Bacteria</taxon>
        <taxon>Pseudomonadati</taxon>
        <taxon>Spirochaetota</taxon>
        <taxon>Spirochaetia</taxon>
        <taxon>Spirochaetales</taxon>
        <taxon>Treponemataceae</taxon>
        <taxon>Treponema</taxon>
    </lineage>
</organism>
<comment type="function">
    <text evidence="1">An essential GTPase which binds GTP, GDP and possibly (p)ppGpp with moderate affinity, with high nucleotide exchange rates and a fairly low GTP hydrolysis rate. Plays a role in control of the cell cycle, stress response, ribosome biogenesis and in those bacteria that undergo differentiation, in morphogenesis control.</text>
</comment>
<comment type="cofactor">
    <cofactor evidence="1">
        <name>Mg(2+)</name>
        <dbReference type="ChEBI" id="CHEBI:18420"/>
    </cofactor>
</comment>
<comment type="subunit">
    <text evidence="1">Monomer.</text>
</comment>
<comment type="subcellular location">
    <subcellularLocation>
        <location evidence="1">Cytoplasm</location>
    </subcellularLocation>
</comment>
<comment type="similarity">
    <text evidence="1">Belongs to the TRAFAC class OBG-HflX-like GTPase superfamily. OBG GTPase family.</text>
</comment>
<name>OBG_TREPS</name>
<keyword id="KW-0963">Cytoplasm</keyword>
<keyword id="KW-0342">GTP-binding</keyword>
<keyword id="KW-0378">Hydrolase</keyword>
<keyword id="KW-0460">Magnesium</keyword>
<keyword id="KW-0479">Metal-binding</keyword>
<keyword id="KW-0547">Nucleotide-binding</keyword>
<protein>
    <recommendedName>
        <fullName evidence="1">GTPase Obg</fullName>
        <ecNumber evidence="1">3.6.5.-</ecNumber>
    </recommendedName>
    <alternativeName>
        <fullName evidence="1">GTP-binding protein Obg</fullName>
    </alternativeName>
</protein>
<feature type="chain" id="PRO_0000386367" description="GTPase Obg">
    <location>
        <begin position="1"/>
        <end position="376"/>
    </location>
</feature>
<feature type="domain" description="Obg" evidence="2">
    <location>
        <begin position="2"/>
        <end position="161"/>
    </location>
</feature>
<feature type="domain" description="OBG-type G" evidence="1">
    <location>
        <begin position="162"/>
        <end position="328"/>
    </location>
</feature>
<feature type="binding site" evidence="1">
    <location>
        <begin position="168"/>
        <end position="175"/>
    </location>
    <ligand>
        <name>GTP</name>
        <dbReference type="ChEBI" id="CHEBI:37565"/>
    </ligand>
</feature>
<feature type="binding site" evidence="1">
    <location>
        <position position="175"/>
    </location>
    <ligand>
        <name>Mg(2+)</name>
        <dbReference type="ChEBI" id="CHEBI:18420"/>
    </ligand>
</feature>
<feature type="binding site" evidence="1">
    <location>
        <begin position="193"/>
        <end position="197"/>
    </location>
    <ligand>
        <name>GTP</name>
        <dbReference type="ChEBI" id="CHEBI:37565"/>
    </ligand>
</feature>
<feature type="binding site" evidence="1">
    <location>
        <position position="195"/>
    </location>
    <ligand>
        <name>Mg(2+)</name>
        <dbReference type="ChEBI" id="CHEBI:18420"/>
    </ligand>
</feature>
<feature type="binding site" evidence="1">
    <location>
        <begin position="215"/>
        <end position="218"/>
    </location>
    <ligand>
        <name>GTP</name>
        <dbReference type="ChEBI" id="CHEBI:37565"/>
    </ligand>
</feature>
<feature type="binding site" evidence="1">
    <location>
        <begin position="282"/>
        <end position="285"/>
    </location>
    <ligand>
        <name>GTP</name>
        <dbReference type="ChEBI" id="CHEBI:37565"/>
    </ligand>
</feature>
<feature type="binding site" evidence="1">
    <location>
        <begin position="309"/>
        <end position="311"/>
    </location>
    <ligand>
        <name>GTP</name>
        <dbReference type="ChEBI" id="CHEBI:37565"/>
    </ligand>
</feature>
<dbReference type="EC" id="3.6.5.-" evidence="1"/>
<dbReference type="EMBL" id="CP000805">
    <property type="protein sequence ID" value="ACD71160.1"/>
    <property type="molecule type" value="Genomic_DNA"/>
</dbReference>
<dbReference type="SMR" id="B2S3Y1"/>
<dbReference type="KEGG" id="tpp:TPASS_0742"/>
<dbReference type="PATRIC" id="fig|455434.6.peg.732"/>
<dbReference type="Proteomes" id="UP000001202">
    <property type="component" value="Chromosome"/>
</dbReference>
<dbReference type="GO" id="GO:0005737">
    <property type="term" value="C:cytoplasm"/>
    <property type="evidence" value="ECO:0007669"/>
    <property type="project" value="UniProtKB-SubCell"/>
</dbReference>
<dbReference type="GO" id="GO:0005525">
    <property type="term" value="F:GTP binding"/>
    <property type="evidence" value="ECO:0007669"/>
    <property type="project" value="UniProtKB-UniRule"/>
</dbReference>
<dbReference type="GO" id="GO:0003924">
    <property type="term" value="F:GTPase activity"/>
    <property type="evidence" value="ECO:0007669"/>
    <property type="project" value="UniProtKB-UniRule"/>
</dbReference>
<dbReference type="GO" id="GO:0000287">
    <property type="term" value="F:magnesium ion binding"/>
    <property type="evidence" value="ECO:0007669"/>
    <property type="project" value="InterPro"/>
</dbReference>
<dbReference type="GO" id="GO:0042254">
    <property type="term" value="P:ribosome biogenesis"/>
    <property type="evidence" value="ECO:0007669"/>
    <property type="project" value="UniProtKB-UniRule"/>
</dbReference>
<dbReference type="CDD" id="cd01898">
    <property type="entry name" value="Obg"/>
    <property type="match status" value="1"/>
</dbReference>
<dbReference type="FunFam" id="2.70.210.12:FF:000001">
    <property type="entry name" value="GTPase Obg"/>
    <property type="match status" value="1"/>
</dbReference>
<dbReference type="Gene3D" id="2.70.210.12">
    <property type="entry name" value="GTP1/OBG domain"/>
    <property type="match status" value="1"/>
</dbReference>
<dbReference type="Gene3D" id="3.40.50.300">
    <property type="entry name" value="P-loop containing nucleotide triphosphate hydrolases"/>
    <property type="match status" value="1"/>
</dbReference>
<dbReference type="HAMAP" id="MF_01454">
    <property type="entry name" value="GTPase_Obg"/>
    <property type="match status" value="1"/>
</dbReference>
<dbReference type="InterPro" id="IPR031167">
    <property type="entry name" value="G_OBG"/>
</dbReference>
<dbReference type="InterPro" id="IPR006073">
    <property type="entry name" value="GTP-bd"/>
</dbReference>
<dbReference type="InterPro" id="IPR014100">
    <property type="entry name" value="GTP-bd_Obg/CgtA"/>
</dbReference>
<dbReference type="InterPro" id="IPR006169">
    <property type="entry name" value="GTP1_OBG_dom"/>
</dbReference>
<dbReference type="InterPro" id="IPR036726">
    <property type="entry name" value="GTP1_OBG_dom_sf"/>
</dbReference>
<dbReference type="InterPro" id="IPR045086">
    <property type="entry name" value="OBG_GTPase"/>
</dbReference>
<dbReference type="InterPro" id="IPR027417">
    <property type="entry name" value="P-loop_NTPase"/>
</dbReference>
<dbReference type="NCBIfam" id="TIGR02729">
    <property type="entry name" value="Obg_CgtA"/>
    <property type="match status" value="1"/>
</dbReference>
<dbReference type="NCBIfam" id="NF008956">
    <property type="entry name" value="PRK12299.1"/>
    <property type="match status" value="1"/>
</dbReference>
<dbReference type="PANTHER" id="PTHR11702">
    <property type="entry name" value="DEVELOPMENTALLY REGULATED GTP-BINDING PROTEIN-RELATED"/>
    <property type="match status" value="1"/>
</dbReference>
<dbReference type="PANTHER" id="PTHR11702:SF31">
    <property type="entry name" value="MITOCHONDRIAL RIBOSOME-ASSOCIATED GTPASE 2"/>
    <property type="match status" value="1"/>
</dbReference>
<dbReference type="Pfam" id="PF01018">
    <property type="entry name" value="GTP1_OBG"/>
    <property type="match status" value="1"/>
</dbReference>
<dbReference type="Pfam" id="PF01926">
    <property type="entry name" value="MMR_HSR1"/>
    <property type="match status" value="1"/>
</dbReference>
<dbReference type="PIRSF" id="PIRSF002401">
    <property type="entry name" value="GTP_bd_Obg/CgtA"/>
    <property type="match status" value="1"/>
</dbReference>
<dbReference type="PRINTS" id="PR00326">
    <property type="entry name" value="GTP1OBG"/>
</dbReference>
<dbReference type="SUPFAM" id="SSF82051">
    <property type="entry name" value="Obg GTP-binding protein N-terminal domain"/>
    <property type="match status" value="1"/>
</dbReference>
<dbReference type="SUPFAM" id="SSF52540">
    <property type="entry name" value="P-loop containing nucleoside triphosphate hydrolases"/>
    <property type="match status" value="1"/>
</dbReference>
<dbReference type="PROSITE" id="PS51710">
    <property type="entry name" value="G_OBG"/>
    <property type="match status" value="1"/>
</dbReference>
<dbReference type="PROSITE" id="PS51883">
    <property type="entry name" value="OBG"/>
    <property type="match status" value="1"/>
</dbReference>
<sequence>MASFVDEVLIRVSSGRGGNGCVAFRREKYVPRGGPAGGDGGRGGDVVFQVRRNMRTLVHLRYGRVFRAKNGQDGEGARRFGAKGHDCVIPLPPGCLLRDAQTHEVLHDFGHAHEGCVTLLSGGRGGWGNYHFRGPVQQAPQRAHSGQPGQERVVHVELRIVADVGFVGLPNAGKSSLLNFFTHARSRVAPYPFTTRIPYLGVLRTGDGRDVILADVPGILERASQGVGLGLRFLKHLTRCAGLAFLIDLADERALHTYDLLCKELYAFSPVFETKARVLVGTKLDLPNARECLQQLRAQHPSTEVCGVSVHNRWGLDELQEAFVRLSDAGAGALRSPVWRNQAPSFMYAQLEDPVCQVRDDFGATVSLSRKRKVRG</sequence>
<evidence type="ECO:0000255" key="1">
    <source>
        <dbReference type="HAMAP-Rule" id="MF_01454"/>
    </source>
</evidence>
<evidence type="ECO:0000255" key="2">
    <source>
        <dbReference type="PROSITE-ProRule" id="PRU01231"/>
    </source>
</evidence>
<proteinExistence type="inferred from homology"/>
<gene>
    <name evidence="1" type="primary">obg</name>
    <name type="ordered locus">TPASS_0742</name>
</gene>
<accession>B2S3Y1</accession>